<sequence length="608" mass="66949">MCGIVGYSGKKEASSILVEGLSKLEYRGYDSAGVAILNDGKINVSKCKGRLVNLENKLEENPIAGNIGIGHTRWATHGEPSDLNAHPHSNKDNTISVVHNGIIENYMQLRTWLKSKGYEFKSETDTEVIPNLVDYFYEGNLLDAVIKAISKVEGSYALGIVSSKEPDKVVAVRKDSPLIVGISEDGNFIASDVPAILNHTRDIYYIKDKEFVVLTSEGVEFYSNEGEKIEKELNHIEWDANAAEKGGYEHFMLKEIYEQPKAIRDTMTSRIIAGQPIKLDDISITKEQIENIDKIYIVACGTAYHAGVVGKYVIEKFARIPVEVDIASEFRYRDPIITKNTLMIVLSQSGETADTLAALREAKSIGARVIAVTNVVGSSVARAADDILYTWAGPEIAVASTKAYTTQLITMYILGLFFAQNKNTLTNEEIEKIKADMLTLPEKAEEVLASKEKVQKFAANTYMHKDMFYLGRGIDYAVAMEGALKLKEISYIHAEAYAGGELKHGTIALIEEGTVVVALGTQSDIYDKMVSNIKEVTTRGAKVLGIAAEGRKGMEEVVDSVIYVPEVNDMLLPVLSVMQLQLLAYYVSVEKGCDVDKPRNLAKSVTVE</sequence>
<evidence type="ECO:0000255" key="1">
    <source>
        <dbReference type="HAMAP-Rule" id="MF_00164"/>
    </source>
</evidence>
<protein>
    <recommendedName>
        <fullName evidence="1">Glutamine--fructose-6-phosphate aminotransferase [isomerizing]</fullName>
        <ecNumber evidence="1">2.6.1.16</ecNumber>
    </recommendedName>
    <alternativeName>
        <fullName evidence="1">D-fructose-6-phosphate amidotransferase</fullName>
    </alternativeName>
    <alternativeName>
        <fullName evidence="1">GFAT</fullName>
    </alternativeName>
    <alternativeName>
        <fullName evidence="1">Glucosamine-6-phosphate synthase</fullName>
    </alternativeName>
    <alternativeName>
        <fullName evidence="1">Hexosephosphate aminotransferase</fullName>
    </alternativeName>
    <alternativeName>
        <fullName evidence="1">L-glutamine--D-fructose-6-phosphate amidotransferase</fullName>
    </alternativeName>
</protein>
<dbReference type="EC" id="2.6.1.16" evidence="1"/>
<dbReference type="EMBL" id="AE001437">
    <property type="protein sequence ID" value="AAK78142.1"/>
    <property type="molecule type" value="Genomic_DNA"/>
</dbReference>
<dbReference type="PIR" id="C96919">
    <property type="entry name" value="C96919"/>
</dbReference>
<dbReference type="RefSeq" id="NP_346802.1">
    <property type="nucleotide sequence ID" value="NC_003030.1"/>
</dbReference>
<dbReference type="RefSeq" id="WP_010963484.1">
    <property type="nucleotide sequence ID" value="NC_003030.1"/>
</dbReference>
<dbReference type="SMR" id="Q97MN6"/>
<dbReference type="STRING" id="272562.CA_C0158"/>
<dbReference type="KEGG" id="cac:CA_C0158"/>
<dbReference type="PATRIC" id="fig|272562.8.peg.342"/>
<dbReference type="eggNOG" id="COG0449">
    <property type="taxonomic scope" value="Bacteria"/>
</dbReference>
<dbReference type="HOGENOM" id="CLU_012520_5_2_9"/>
<dbReference type="OrthoDB" id="106547at2"/>
<dbReference type="Proteomes" id="UP000000814">
    <property type="component" value="Chromosome"/>
</dbReference>
<dbReference type="GO" id="GO:0005829">
    <property type="term" value="C:cytosol"/>
    <property type="evidence" value="ECO:0007669"/>
    <property type="project" value="TreeGrafter"/>
</dbReference>
<dbReference type="GO" id="GO:0097367">
    <property type="term" value="F:carbohydrate derivative binding"/>
    <property type="evidence" value="ECO:0007669"/>
    <property type="project" value="InterPro"/>
</dbReference>
<dbReference type="GO" id="GO:0004360">
    <property type="term" value="F:glutamine-fructose-6-phosphate transaminase (isomerizing) activity"/>
    <property type="evidence" value="ECO:0007669"/>
    <property type="project" value="UniProtKB-UniRule"/>
</dbReference>
<dbReference type="GO" id="GO:0005975">
    <property type="term" value="P:carbohydrate metabolic process"/>
    <property type="evidence" value="ECO:0007669"/>
    <property type="project" value="UniProtKB-UniRule"/>
</dbReference>
<dbReference type="GO" id="GO:0006002">
    <property type="term" value="P:fructose 6-phosphate metabolic process"/>
    <property type="evidence" value="ECO:0007669"/>
    <property type="project" value="TreeGrafter"/>
</dbReference>
<dbReference type="GO" id="GO:0006487">
    <property type="term" value="P:protein N-linked glycosylation"/>
    <property type="evidence" value="ECO:0007669"/>
    <property type="project" value="TreeGrafter"/>
</dbReference>
<dbReference type="GO" id="GO:0006047">
    <property type="term" value="P:UDP-N-acetylglucosamine metabolic process"/>
    <property type="evidence" value="ECO:0007669"/>
    <property type="project" value="TreeGrafter"/>
</dbReference>
<dbReference type="CDD" id="cd00714">
    <property type="entry name" value="GFAT"/>
    <property type="match status" value="1"/>
</dbReference>
<dbReference type="CDD" id="cd05008">
    <property type="entry name" value="SIS_GlmS_GlmD_1"/>
    <property type="match status" value="1"/>
</dbReference>
<dbReference type="CDD" id="cd05009">
    <property type="entry name" value="SIS_GlmS_GlmD_2"/>
    <property type="match status" value="1"/>
</dbReference>
<dbReference type="FunFam" id="3.40.50.10490:FF:000001">
    <property type="entry name" value="Glutamine--fructose-6-phosphate aminotransferase [isomerizing]"/>
    <property type="match status" value="1"/>
</dbReference>
<dbReference type="FunFam" id="3.40.50.10490:FF:000022">
    <property type="entry name" value="Glutamine--fructose-6-phosphate aminotransferase [isomerizing]"/>
    <property type="match status" value="1"/>
</dbReference>
<dbReference type="FunFam" id="3.60.20.10:FF:000006">
    <property type="entry name" value="Glutamine--fructose-6-phosphate aminotransferase [isomerizing]"/>
    <property type="match status" value="1"/>
</dbReference>
<dbReference type="Gene3D" id="3.40.50.10490">
    <property type="entry name" value="Glucose-6-phosphate isomerase like protein, domain 1"/>
    <property type="match status" value="2"/>
</dbReference>
<dbReference type="Gene3D" id="3.60.20.10">
    <property type="entry name" value="Glutamine Phosphoribosylpyrophosphate, subunit 1, domain 1"/>
    <property type="match status" value="1"/>
</dbReference>
<dbReference type="HAMAP" id="MF_00164">
    <property type="entry name" value="GlmS"/>
    <property type="match status" value="1"/>
</dbReference>
<dbReference type="InterPro" id="IPR017932">
    <property type="entry name" value="GATase_2_dom"/>
</dbReference>
<dbReference type="InterPro" id="IPR005855">
    <property type="entry name" value="GFAT"/>
</dbReference>
<dbReference type="InterPro" id="IPR047084">
    <property type="entry name" value="GFAT_N"/>
</dbReference>
<dbReference type="InterPro" id="IPR035466">
    <property type="entry name" value="GlmS/AgaS_SIS"/>
</dbReference>
<dbReference type="InterPro" id="IPR035490">
    <property type="entry name" value="GlmS/FrlB_SIS"/>
</dbReference>
<dbReference type="InterPro" id="IPR029055">
    <property type="entry name" value="Ntn_hydrolases_N"/>
</dbReference>
<dbReference type="InterPro" id="IPR001347">
    <property type="entry name" value="SIS_dom"/>
</dbReference>
<dbReference type="InterPro" id="IPR046348">
    <property type="entry name" value="SIS_dom_sf"/>
</dbReference>
<dbReference type="NCBIfam" id="TIGR01135">
    <property type="entry name" value="glmS"/>
    <property type="match status" value="1"/>
</dbReference>
<dbReference type="NCBIfam" id="NF001484">
    <property type="entry name" value="PRK00331.1"/>
    <property type="match status" value="1"/>
</dbReference>
<dbReference type="PANTHER" id="PTHR10937">
    <property type="entry name" value="GLUCOSAMINE--FRUCTOSE-6-PHOSPHATE AMINOTRANSFERASE, ISOMERIZING"/>
    <property type="match status" value="1"/>
</dbReference>
<dbReference type="PANTHER" id="PTHR10937:SF0">
    <property type="entry name" value="GLUTAMINE--FRUCTOSE-6-PHOSPHATE TRANSAMINASE (ISOMERIZING)"/>
    <property type="match status" value="1"/>
</dbReference>
<dbReference type="Pfam" id="PF13522">
    <property type="entry name" value="GATase_6"/>
    <property type="match status" value="1"/>
</dbReference>
<dbReference type="Pfam" id="PF01380">
    <property type="entry name" value="SIS"/>
    <property type="match status" value="2"/>
</dbReference>
<dbReference type="SUPFAM" id="SSF56235">
    <property type="entry name" value="N-terminal nucleophile aminohydrolases (Ntn hydrolases)"/>
    <property type="match status" value="1"/>
</dbReference>
<dbReference type="SUPFAM" id="SSF53697">
    <property type="entry name" value="SIS domain"/>
    <property type="match status" value="1"/>
</dbReference>
<dbReference type="PROSITE" id="PS51278">
    <property type="entry name" value="GATASE_TYPE_2"/>
    <property type="match status" value="1"/>
</dbReference>
<dbReference type="PROSITE" id="PS51464">
    <property type="entry name" value="SIS"/>
    <property type="match status" value="2"/>
</dbReference>
<keyword id="KW-0032">Aminotransferase</keyword>
<keyword id="KW-0963">Cytoplasm</keyword>
<keyword id="KW-0315">Glutamine amidotransferase</keyword>
<keyword id="KW-1185">Reference proteome</keyword>
<keyword id="KW-0677">Repeat</keyword>
<keyword id="KW-0808">Transferase</keyword>
<comment type="function">
    <text evidence="1">Catalyzes the first step in hexosamine metabolism, converting fructose-6P into glucosamine-6P using glutamine as a nitrogen source.</text>
</comment>
<comment type="catalytic activity">
    <reaction evidence="1">
        <text>D-fructose 6-phosphate + L-glutamine = D-glucosamine 6-phosphate + L-glutamate</text>
        <dbReference type="Rhea" id="RHEA:13237"/>
        <dbReference type="ChEBI" id="CHEBI:29985"/>
        <dbReference type="ChEBI" id="CHEBI:58359"/>
        <dbReference type="ChEBI" id="CHEBI:58725"/>
        <dbReference type="ChEBI" id="CHEBI:61527"/>
        <dbReference type="EC" id="2.6.1.16"/>
    </reaction>
</comment>
<comment type="subunit">
    <text evidence="1">Homodimer.</text>
</comment>
<comment type="subcellular location">
    <subcellularLocation>
        <location evidence="1">Cytoplasm</location>
    </subcellularLocation>
</comment>
<reference key="1">
    <citation type="journal article" date="2001" name="J. Bacteriol.">
        <title>Genome sequence and comparative analysis of the solvent-producing bacterium Clostridium acetobutylicum.</title>
        <authorList>
            <person name="Noelling J."/>
            <person name="Breton G."/>
            <person name="Omelchenko M.V."/>
            <person name="Makarova K.S."/>
            <person name="Zeng Q."/>
            <person name="Gibson R."/>
            <person name="Lee H.M."/>
            <person name="Dubois J."/>
            <person name="Qiu D."/>
            <person name="Hitti J."/>
            <person name="Wolf Y.I."/>
            <person name="Tatusov R.L."/>
            <person name="Sabathe F."/>
            <person name="Doucette-Stamm L.A."/>
            <person name="Soucaille P."/>
            <person name="Daly M.J."/>
            <person name="Bennett G.N."/>
            <person name="Koonin E.V."/>
            <person name="Smith D.R."/>
        </authorList>
    </citation>
    <scope>NUCLEOTIDE SEQUENCE [LARGE SCALE GENOMIC DNA]</scope>
    <source>
        <strain>ATCC 824 / DSM 792 / JCM 1419 / IAM 19013 / LMG 5710 / NBRC 13948 / NRRL B-527 / VKM B-1787 / 2291 / W</strain>
    </source>
</reference>
<name>GLMS_CLOAB</name>
<proteinExistence type="inferred from homology"/>
<organism>
    <name type="scientific">Clostridium acetobutylicum (strain ATCC 824 / DSM 792 / JCM 1419 / IAM 19013 / LMG 5710 / NBRC 13948 / NRRL B-527 / VKM B-1787 / 2291 / W)</name>
    <dbReference type="NCBI Taxonomy" id="272562"/>
    <lineage>
        <taxon>Bacteria</taxon>
        <taxon>Bacillati</taxon>
        <taxon>Bacillota</taxon>
        <taxon>Clostridia</taxon>
        <taxon>Eubacteriales</taxon>
        <taxon>Clostridiaceae</taxon>
        <taxon>Clostridium</taxon>
    </lineage>
</organism>
<feature type="initiator methionine" description="Removed" evidence="1">
    <location>
        <position position="1"/>
    </location>
</feature>
<feature type="chain" id="PRO_0000135322" description="Glutamine--fructose-6-phosphate aminotransferase [isomerizing]">
    <location>
        <begin position="2"/>
        <end position="608"/>
    </location>
</feature>
<feature type="domain" description="Glutamine amidotransferase type-2" evidence="1">
    <location>
        <begin position="2"/>
        <end position="217"/>
    </location>
</feature>
<feature type="domain" description="SIS 1" evidence="1">
    <location>
        <begin position="285"/>
        <end position="424"/>
    </location>
</feature>
<feature type="domain" description="SIS 2" evidence="1">
    <location>
        <begin position="453"/>
        <end position="598"/>
    </location>
</feature>
<feature type="active site" description="Nucleophile; for GATase activity" evidence="1">
    <location>
        <position position="2"/>
    </location>
</feature>
<feature type="active site" description="For Fru-6P isomerization activity" evidence="1">
    <location>
        <position position="603"/>
    </location>
</feature>
<gene>
    <name evidence="1" type="primary">glmS</name>
    <name type="ordered locus">CA_C0158</name>
</gene>
<accession>Q97MN6</accession>